<accession>Q1WUG4</accession>
<reference key="1">
    <citation type="journal article" date="2006" name="Proc. Natl. Acad. Sci. U.S.A.">
        <title>Multireplicon genome architecture of Lactobacillus salivarius.</title>
        <authorList>
            <person name="Claesson M.J."/>
            <person name="Li Y."/>
            <person name="Leahy S."/>
            <person name="Canchaya C."/>
            <person name="van Pijkeren J.P."/>
            <person name="Cerdeno-Tarraga A.M."/>
            <person name="Parkhill J."/>
            <person name="Flynn S."/>
            <person name="O'Sullivan G.C."/>
            <person name="Collins J.K."/>
            <person name="Higgins D."/>
            <person name="Shanahan F."/>
            <person name="Fitzgerald G.F."/>
            <person name="van Sinderen D."/>
            <person name="O'Toole P.W."/>
        </authorList>
    </citation>
    <scope>NUCLEOTIDE SEQUENCE [LARGE SCALE GENOMIC DNA]</scope>
    <source>
        <strain>UCC118</strain>
    </source>
</reference>
<gene>
    <name evidence="1" type="primary">frr</name>
    <name type="ordered locus">LSL_0562</name>
</gene>
<comment type="function">
    <text evidence="1">Responsible for the release of ribosomes from messenger RNA at the termination of protein biosynthesis. May increase the efficiency of translation by recycling ribosomes from one round of translation to another.</text>
</comment>
<comment type="subcellular location">
    <subcellularLocation>
        <location evidence="1">Cytoplasm</location>
    </subcellularLocation>
</comment>
<comment type="similarity">
    <text evidence="1">Belongs to the RRF family.</text>
</comment>
<organism>
    <name type="scientific">Ligilactobacillus salivarius (strain UCC118)</name>
    <name type="common">Lactobacillus salivarius</name>
    <dbReference type="NCBI Taxonomy" id="362948"/>
    <lineage>
        <taxon>Bacteria</taxon>
        <taxon>Bacillati</taxon>
        <taxon>Bacillota</taxon>
        <taxon>Bacilli</taxon>
        <taxon>Lactobacillales</taxon>
        <taxon>Lactobacillaceae</taxon>
        <taxon>Ligilactobacillus</taxon>
    </lineage>
</organism>
<proteinExistence type="inferred from homology"/>
<name>RRF_LIGS1</name>
<sequence>MKITEPIIKEAQEKMTKAEDSLRRELGNIRAGRANASLLNRINVEYYGAPTPLNQMAQISVPEARVLLVTPYDKTSLKNIEHAIMASDLGIAPMNDGTAIRLVIPQLTEERRKELAKQVKAVSETGKVAVRNIRRDMMDALKKAQKNGDLTEDDLRDLENQAQKVTDESIKNIDKITEDKEKEVLEG</sequence>
<keyword id="KW-0963">Cytoplasm</keyword>
<keyword id="KW-0648">Protein biosynthesis</keyword>
<keyword id="KW-1185">Reference proteome</keyword>
<dbReference type="EMBL" id="CP000233">
    <property type="protein sequence ID" value="ABD99371.1"/>
    <property type="molecule type" value="Genomic_DNA"/>
</dbReference>
<dbReference type="RefSeq" id="WP_003705950.1">
    <property type="nucleotide sequence ID" value="NC_007929.1"/>
</dbReference>
<dbReference type="RefSeq" id="YP_535454.1">
    <property type="nucleotide sequence ID" value="NC_007929.1"/>
</dbReference>
<dbReference type="SMR" id="Q1WUG4"/>
<dbReference type="STRING" id="362948.LSL_0562"/>
<dbReference type="GeneID" id="89465348"/>
<dbReference type="KEGG" id="lsl:LSL_0562"/>
<dbReference type="PATRIC" id="fig|362948.14.peg.641"/>
<dbReference type="HOGENOM" id="CLU_073981_2_0_9"/>
<dbReference type="OrthoDB" id="9804006at2"/>
<dbReference type="Proteomes" id="UP000006559">
    <property type="component" value="Chromosome"/>
</dbReference>
<dbReference type="GO" id="GO:0005737">
    <property type="term" value="C:cytoplasm"/>
    <property type="evidence" value="ECO:0007669"/>
    <property type="project" value="UniProtKB-SubCell"/>
</dbReference>
<dbReference type="GO" id="GO:0043023">
    <property type="term" value="F:ribosomal large subunit binding"/>
    <property type="evidence" value="ECO:0007669"/>
    <property type="project" value="TreeGrafter"/>
</dbReference>
<dbReference type="GO" id="GO:0006415">
    <property type="term" value="P:translational termination"/>
    <property type="evidence" value="ECO:0007669"/>
    <property type="project" value="UniProtKB-UniRule"/>
</dbReference>
<dbReference type="CDD" id="cd00520">
    <property type="entry name" value="RRF"/>
    <property type="match status" value="1"/>
</dbReference>
<dbReference type="FunFam" id="1.10.132.20:FF:000001">
    <property type="entry name" value="Ribosome-recycling factor"/>
    <property type="match status" value="1"/>
</dbReference>
<dbReference type="FunFam" id="3.30.1360.40:FF:000001">
    <property type="entry name" value="Ribosome-recycling factor"/>
    <property type="match status" value="1"/>
</dbReference>
<dbReference type="Gene3D" id="3.30.1360.40">
    <property type="match status" value="1"/>
</dbReference>
<dbReference type="Gene3D" id="1.10.132.20">
    <property type="entry name" value="Ribosome-recycling factor"/>
    <property type="match status" value="1"/>
</dbReference>
<dbReference type="HAMAP" id="MF_00040">
    <property type="entry name" value="RRF"/>
    <property type="match status" value="1"/>
</dbReference>
<dbReference type="InterPro" id="IPR002661">
    <property type="entry name" value="Ribosome_recyc_fac"/>
</dbReference>
<dbReference type="InterPro" id="IPR023584">
    <property type="entry name" value="Ribosome_recyc_fac_dom"/>
</dbReference>
<dbReference type="InterPro" id="IPR036191">
    <property type="entry name" value="RRF_sf"/>
</dbReference>
<dbReference type="NCBIfam" id="TIGR00496">
    <property type="entry name" value="frr"/>
    <property type="match status" value="1"/>
</dbReference>
<dbReference type="PANTHER" id="PTHR20982:SF3">
    <property type="entry name" value="MITOCHONDRIAL RIBOSOME RECYCLING FACTOR PSEUDO 1"/>
    <property type="match status" value="1"/>
</dbReference>
<dbReference type="PANTHER" id="PTHR20982">
    <property type="entry name" value="RIBOSOME RECYCLING FACTOR"/>
    <property type="match status" value="1"/>
</dbReference>
<dbReference type="Pfam" id="PF01765">
    <property type="entry name" value="RRF"/>
    <property type="match status" value="1"/>
</dbReference>
<dbReference type="SUPFAM" id="SSF55194">
    <property type="entry name" value="Ribosome recycling factor, RRF"/>
    <property type="match status" value="1"/>
</dbReference>
<protein>
    <recommendedName>
        <fullName evidence="1">Ribosome-recycling factor</fullName>
        <shortName evidence="1">RRF</shortName>
    </recommendedName>
    <alternativeName>
        <fullName evidence="1">Ribosome-releasing factor</fullName>
    </alternativeName>
</protein>
<evidence type="ECO:0000255" key="1">
    <source>
        <dbReference type="HAMAP-Rule" id="MF_00040"/>
    </source>
</evidence>
<feature type="chain" id="PRO_1000003187" description="Ribosome-recycling factor">
    <location>
        <begin position="1"/>
        <end position="187"/>
    </location>
</feature>